<comment type="function">
    <text evidence="1">Plays a role in the reduction of telomerase activity during differentiation of embryonic stem cells by binding to the core promoter of TERT and controlling its down-regulation.</text>
</comment>
<comment type="subunit">
    <text evidence="1">Interacts with PPP1CA and NCOA5. Forms a complex with ILF2, ILF3, KHDRBS1, RBMX, NCOA5 and PPP1CA (By similarity).</text>
</comment>
<comment type="interaction">
    <interactant intactId="EBI-712871">
        <id>P49750</id>
    </interactant>
    <interactant intactId="EBI-766279">
        <id>O00555</id>
        <label>CACNA1A</label>
    </interactant>
    <organismsDiffer>false</organismsDiffer>
    <experiments>2</experiments>
</comment>
<comment type="interaction">
    <interactant intactId="EBI-712871">
        <id>P49750</id>
    </interactant>
    <interactant intactId="EBI-357253">
        <id>P62136</id>
        <label>PPP1CA</label>
    </interactant>
    <organismsDiffer>false</organismsDiffer>
    <experiments>4</experiments>
</comment>
<comment type="subcellular location">
    <subcellularLocation>
        <location evidence="3">Nucleus</location>
    </subcellularLocation>
    <subcellularLocation>
        <location evidence="1">Nucleus speckle</location>
    </subcellularLocation>
    <text>Migrates to nucleolar caps upon blockage of transcription.</text>
</comment>
<comment type="alternative products">
    <event type="alternative splicing"/>
    <isoform>
        <id>P49750-4</id>
        <name>4</name>
        <sequence type="displayed"/>
    </isoform>
    <isoform>
        <id>P49750-3</id>
        <name>3</name>
        <sequence type="described" ref="VSP_059470 VSP_059471 VSP_059472"/>
    </isoform>
    <isoform>
        <id>P49750-1</id>
        <name>1</name>
        <sequence type="described" ref="VSP_059470"/>
    </isoform>
</comment>
<comment type="tissue specificity">
    <text evidence="3">Expressed in neuronal, neuroblastoma and embryonic kidney cell lines (at protein level).</text>
</comment>
<comment type="sequence caution" evidence="4">
    <conflict type="frameshift">
        <sequence resource="EMBL-CDS" id="AAC42008"/>
    </conflict>
</comment>
<comment type="sequence caution" evidence="4">
    <conflict type="erroneous gene model prediction">
        <sequence resource="EMBL-CDS" id="AAF61275"/>
    </conflict>
</comment>
<feature type="chain" id="PRO_0000066298" description="YLP motif-containing protein 1">
    <location>
        <begin position="1"/>
        <end position="2146"/>
    </location>
</feature>
<feature type="region of interest" description="Disordered" evidence="2">
    <location>
        <begin position="1"/>
        <end position="381"/>
    </location>
</feature>
<feature type="region of interest" description="Disordered" evidence="2">
    <location>
        <begin position="562"/>
        <end position="880"/>
    </location>
</feature>
<feature type="region of interest" description="Disordered" evidence="2">
    <location>
        <begin position="895"/>
        <end position="1211"/>
    </location>
</feature>
<feature type="region of interest" description="Disordered" evidence="2">
    <location>
        <begin position="1243"/>
        <end position="1351"/>
    </location>
</feature>
<feature type="region of interest" description="Disordered" evidence="2">
    <location>
        <begin position="1407"/>
        <end position="1438"/>
    </location>
</feature>
<feature type="region of interest" description="Disordered" evidence="2">
    <location>
        <begin position="1469"/>
        <end position="1573"/>
    </location>
</feature>
<feature type="region of interest" description="Disordered" evidence="2">
    <location>
        <begin position="1602"/>
        <end position="1828"/>
    </location>
</feature>
<feature type="region of interest" description="Involved in interaction with PPP1CA" evidence="1">
    <location>
        <begin position="2096"/>
        <end position="2103"/>
    </location>
</feature>
<feature type="compositionally biased region" description="Pro residues" evidence="2">
    <location>
        <begin position="14"/>
        <end position="26"/>
    </location>
</feature>
<feature type="compositionally biased region" description="Low complexity" evidence="2">
    <location>
        <begin position="27"/>
        <end position="48"/>
    </location>
</feature>
<feature type="compositionally biased region" description="Low complexity" evidence="2">
    <location>
        <begin position="58"/>
        <end position="79"/>
    </location>
</feature>
<feature type="compositionally biased region" description="Pro residues" evidence="2">
    <location>
        <begin position="80"/>
        <end position="92"/>
    </location>
</feature>
<feature type="compositionally biased region" description="Pro residues" evidence="2">
    <location>
        <begin position="101"/>
        <end position="113"/>
    </location>
</feature>
<feature type="compositionally biased region" description="Pro residues" evidence="2">
    <location>
        <begin position="147"/>
        <end position="157"/>
    </location>
</feature>
<feature type="compositionally biased region" description="Pro residues" evidence="2">
    <location>
        <begin position="165"/>
        <end position="175"/>
    </location>
</feature>
<feature type="compositionally biased region" description="Pro residues" evidence="2">
    <location>
        <begin position="183"/>
        <end position="194"/>
    </location>
</feature>
<feature type="compositionally biased region" description="Low complexity" evidence="2">
    <location>
        <begin position="195"/>
        <end position="237"/>
    </location>
</feature>
<feature type="compositionally biased region" description="Polar residues" evidence="2">
    <location>
        <begin position="256"/>
        <end position="279"/>
    </location>
</feature>
<feature type="compositionally biased region" description="Polar residues" evidence="2">
    <location>
        <begin position="286"/>
        <end position="308"/>
    </location>
</feature>
<feature type="compositionally biased region" description="Basic residues" evidence="2">
    <location>
        <begin position="309"/>
        <end position="319"/>
    </location>
</feature>
<feature type="compositionally biased region" description="Basic and acidic residues" evidence="2">
    <location>
        <begin position="325"/>
        <end position="334"/>
    </location>
</feature>
<feature type="compositionally biased region" description="Pro residues" evidence="2">
    <location>
        <begin position="349"/>
        <end position="368"/>
    </location>
</feature>
<feature type="compositionally biased region" description="Pro residues" evidence="2">
    <location>
        <begin position="562"/>
        <end position="579"/>
    </location>
</feature>
<feature type="compositionally biased region" description="Pro residues" evidence="2">
    <location>
        <begin position="586"/>
        <end position="642"/>
    </location>
</feature>
<feature type="compositionally biased region" description="Low complexity" evidence="2">
    <location>
        <begin position="643"/>
        <end position="663"/>
    </location>
</feature>
<feature type="compositionally biased region" description="Polar residues" evidence="2">
    <location>
        <begin position="692"/>
        <end position="702"/>
    </location>
</feature>
<feature type="compositionally biased region" description="Basic and acidic residues" evidence="2">
    <location>
        <begin position="758"/>
        <end position="806"/>
    </location>
</feature>
<feature type="compositionally biased region" description="Polar residues" evidence="2">
    <location>
        <begin position="820"/>
        <end position="835"/>
    </location>
</feature>
<feature type="compositionally biased region" description="Polar residues" evidence="2">
    <location>
        <begin position="868"/>
        <end position="880"/>
    </location>
</feature>
<feature type="compositionally biased region" description="Polar residues" evidence="2">
    <location>
        <begin position="896"/>
        <end position="909"/>
    </location>
</feature>
<feature type="compositionally biased region" description="Polar residues" evidence="2">
    <location>
        <begin position="923"/>
        <end position="933"/>
    </location>
</feature>
<feature type="compositionally biased region" description="Basic and acidic residues" evidence="2">
    <location>
        <begin position="994"/>
        <end position="1012"/>
    </location>
</feature>
<feature type="compositionally biased region" description="Basic and acidic residues" evidence="2">
    <location>
        <begin position="1027"/>
        <end position="1036"/>
    </location>
</feature>
<feature type="compositionally biased region" description="Basic and acidic residues" evidence="2">
    <location>
        <begin position="1053"/>
        <end position="1093"/>
    </location>
</feature>
<feature type="compositionally biased region" description="Basic and acidic residues" evidence="2">
    <location>
        <begin position="1129"/>
        <end position="1211"/>
    </location>
</feature>
<feature type="compositionally biased region" description="Basic and acidic residues" evidence="2">
    <location>
        <begin position="1243"/>
        <end position="1264"/>
    </location>
</feature>
<feature type="compositionally biased region" description="Acidic residues" evidence="2">
    <location>
        <begin position="1266"/>
        <end position="1276"/>
    </location>
</feature>
<feature type="compositionally biased region" description="Basic and acidic residues" evidence="2">
    <location>
        <begin position="1277"/>
        <end position="1328"/>
    </location>
</feature>
<feature type="compositionally biased region" description="Pro residues" evidence="2">
    <location>
        <begin position="1330"/>
        <end position="1342"/>
    </location>
</feature>
<feature type="compositionally biased region" description="Low complexity" evidence="2">
    <location>
        <begin position="1417"/>
        <end position="1430"/>
    </location>
</feature>
<feature type="compositionally biased region" description="Basic and acidic residues" evidence="2">
    <location>
        <begin position="1469"/>
        <end position="1480"/>
    </location>
</feature>
<feature type="compositionally biased region" description="Pro residues" evidence="2">
    <location>
        <begin position="1505"/>
        <end position="1520"/>
    </location>
</feature>
<feature type="compositionally biased region" description="Low complexity" evidence="2">
    <location>
        <begin position="1521"/>
        <end position="1539"/>
    </location>
</feature>
<feature type="compositionally biased region" description="Pro residues" evidence="2">
    <location>
        <begin position="1540"/>
        <end position="1562"/>
    </location>
</feature>
<feature type="compositionally biased region" description="Pro residues" evidence="2">
    <location>
        <begin position="1606"/>
        <end position="1636"/>
    </location>
</feature>
<feature type="compositionally biased region" description="Basic and acidic residues" evidence="2">
    <location>
        <begin position="1662"/>
        <end position="1696"/>
    </location>
</feature>
<feature type="compositionally biased region" description="Basic and acidic residues" evidence="2">
    <location>
        <begin position="1704"/>
        <end position="1774"/>
    </location>
</feature>
<feature type="compositionally biased region" description="Basic and acidic residues" evidence="2">
    <location>
        <begin position="1783"/>
        <end position="1793"/>
    </location>
</feature>
<feature type="compositionally biased region" description="Basic and acidic residues" evidence="2">
    <location>
        <begin position="1809"/>
        <end position="1828"/>
    </location>
</feature>
<feature type="modified residue" description="N6-methyllysine" evidence="10">
    <location>
        <position position="735"/>
    </location>
</feature>
<feature type="modified residue" description="Phosphoserine" evidence="9">
    <location>
        <position position="756"/>
    </location>
</feature>
<feature type="modified residue" description="Omega-N-methylarginine" evidence="10">
    <location>
        <position position="814"/>
    </location>
</feature>
<feature type="modified residue" description="Phosphoserine" evidence="5 6 7 8 9">
    <location>
        <position position="829"/>
    </location>
</feature>
<feature type="modified residue" description="Omega-N-methylarginine" evidence="10">
    <location>
        <position position="831"/>
    </location>
</feature>
<feature type="modified residue" description="Phosphoserine" evidence="9">
    <location>
        <position position="1100"/>
    </location>
</feature>
<feature type="modified residue" description="Phosphoserine" evidence="8 9">
    <location>
        <position position="1119"/>
    </location>
</feature>
<feature type="modified residue" description="Phosphoserine" evidence="9">
    <location>
        <position position="1402"/>
    </location>
</feature>
<feature type="cross-link" description="Glycyl lysine isopeptide (Lys-Gly) (interchain with G-Cter in SUMO2)" evidence="15">
    <location>
        <position position="891"/>
    </location>
</feature>
<feature type="cross-link" description="Glycyl lysine isopeptide (Lys-Gly) (interchain with G-Cter in SUMO1); alternate" evidence="11">
    <location>
        <position position="983"/>
    </location>
</feature>
<feature type="cross-link" description="Glycyl lysine isopeptide (Lys-Gly) (interchain with G-Cter in SUMO2); alternate" evidence="15">
    <location>
        <position position="983"/>
    </location>
</feature>
<feature type="cross-link" description="Glycyl lysine isopeptide (Lys-Gly) (interchain with G-Cter in SUMO1); alternate" evidence="11">
    <location>
        <position position="1053"/>
    </location>
</feature>
<feature type="cross-link" description="Glycyl lysine isopeptide (Lys-Gly) (interchain with G-Cter in SUMO2); alternate" evidence="12 13 14 15">
    <location>
        <position position="1053"/>
    </location>
</feature>
<feature type="cross-link" description="Glycyl lysine isopeptide (Lys-Gly) (interchain with G-Cter in SUMO2)" evidence="15">
    <location>
        <position position="1652"/>
    </location>
</feature>
<feature type="cross-link" description="Glycyl lysine isopeptide (Lys-Gly) (interchain with G-Cter in SUMO2)" evidence="15">
    <location>
        <position position="1710"/>
    </location>
</feature>
<feature type="splice variant" id="VSP_059470" description="In isoform 1 and isoform 3.">
    <original>TMSVDMQLRHYEMQQQQFQHLYQEWEREFQLWEEQLHSYPHKDQLQEYEKQWKTWQGHMKATQSYLQEKVNSFQNMKNQYMGNMSMPPPFVPYSQMPPPLPTMPPPVLPPSLPPPVMPPALPATVPPPGMPPPVMPPSLPTSVPPPGMPPSLSSAGPPPVLPPPSLSSAGPPPVLPPPSLSSTAPPPVMPLPPLSSA</original>
    <variation>AT</variation>
    <location>
        <begin position="431"/>
        <end position="627"/>
    </location>
</feature>
<feature type="splice variant" id="VSP_059471" description="In isoform 3.">
    <original>GYIPKSKWEMDTSEAKLDKL</original>
    <variation>VGDRPTTLNSVSLLKFLKKV</variation>
    <location>
        <begin position="2038"/>
        <end position="2057"/>
    </location>
</feature>
<feature type="splice variant" id="VSP_059472" description="In isoform 3.">
    <location>
        <begin position="2058"/>
        <end position="2146"/>
    </location>
</feature>
<feature type="sequence conflict" description="In Ref. 2; AK095760." evidence="4" ref="2">
    <original>Q</original>
    <variation>R</variation>
    <location>
        <position position="421"/>
    </location>
</feature>
<feature type="sequence conflict" description="In Ref. 2; AK095760." evidence="4" ref="2">
    <original>S</original>
    <variation>P</variation>
    <location>
        <position position="524"/>
    </location>
</feature>
<feature type="sequence conflict" description="In Ref. 3; AAC42006." evidence="4" ref="3">
    <original>P</original>
    <variation>S</variation>
    <location>
        <position position="816"/>
    </location>
</feature>
<feature type="sequence conflict" description="In Ref. 3; AAC42008." evidence="4" ref="3">
    <original>T</original>
    <variation>I</variation>
    <location>
        <position position="1599"/>
    </location>
</feature>
<feature type="sequence conflict" description="In Ref. 3; AAC42008." evidence="4" ref="3">
    <original>K</original>
    <variation>E</variation>
    <location sequence="P49750-3">
        <position position="1861"/>
    </location>
</feature>
<sequence length="2146" mass="241645">MYPNWGRYGGSSHYPPPPVPPPPPVALPEASPGPGYSSSTTPAAPSSSGFMSFREQHLAQLQQLQQMHQKQMQCVLQPHHLPPPPLPPPPVMPGGGYGDWQPPPPPMPPPPGPALSYQKQQQYKHQMLHHQRDGPPGLVPMELESPPESPPVPPGSYMPPSQSYMPPPQPPPSYYPPTSSQPYLPPAQPSPSQSPPSQSYLAPTPSYSSSSSSSQSYLSHSQSYLPSSQASPSRPSQGHSKSQLLAPPPPSAPPGNKTTVQQEPLESGAKNKSTEQQQAAPEPDPSTMTPQEQQQYWYRQHLLSLQQRTKVHLPGHKKGPVVAKDTPEPVKEEVTVPATSQVPESPSSEEPPLPPPNEEVPPPLPPEEPQSEDPEEDARLKQLQAAAAHWQQHQQHRVGFQYQGIMQKHTQLQQILQQYQQIIQPPPHIQTMSVDMQLRHYEMQQQQFQHLYQEWEREFQLWEEQLHSYPHKDQLQEYEKQWKTWQGHMKATQSYLQEKVNSFQNMKNQYMGNMSMPPPFVPYSQMPPPLPTMPPPVLPPSLPPPVMPPALPATVPPPGMPPPVMPPSLPTSVPPPGMPPSLSSAGPPPVLPPPSLSSAGPPPVLPPPSLSSTAPPPVMPLPPLSSATPPPGIPPPGVPQGIPPQLTAAPVPPASSSQSSQVPEKPRPALLPTPVSFGSAPPTTYHPPLQSAGPSEQVNSKAPLSKSALPYSSFSSDQGLGESSAAPSQPITAVKDMPVRSGGLLPDPPRSSYLESPRGPRFDGPRRFEDLGSRCEGPRPKGPRFEGNRPDGPRPRYEGHPAEGTKSKWGMIPRGPASQFYITPSTSLSPRQSGPQWKGPKPAFGQQHQQQPKSQAEPLSGNKEPLADTSSNQQKNFKMQSAAFSIAADVKDVKAAQSNENLSDSQQEPPKSEVSEGPVEPSNWDQNVQSMETQIDKAQAVTQPVPLANKPVPAQSTFPSKTGGMEGGTAVATSSLTADNDFKPVGIGLPHSENNQDKGLPRPDNRDNRLEGNRGNSSSYRGPGQSRMEDTRDKGLVNRGRGQAISRGPGLVKQEDFRDKMMGRREDSREKMNRGEGSRDRGLVRPGSSREKVPGGLQGSQDRGAAGSRERGPPRRAGSQERGPLRRAGSRERIPPRRAGSRERGPPRGPGSRERGLGRSDFGRDRGPFRPEPGDGGEKMYPYHRDEPPRAPWNHGEERGHEEFPLDGRNAPMERERLDDWDRERYWRECERDYQDDTLELYNREDRFSAPPSRSHDGDRRGPWWDDWERDQDMDEDYNREMERDMDRDVDRISRPMDMYDRSLDNEWDRDYGRPLDEQESQFRERDIPSLPPLPPLPPLPPLDRYRDDRWREERNREHGYDRDFRDRGELRIREYPERGDTWREKRDYVPDRMDWERERLSDRWYPSDVDRHSPMAEHMPSSHHSSEMMGSDASLDSDQGLGGVMVLSQRQHEIILKAAQELKMLREQKEQLQKMKDFGSEPQMADHLPPQESRLQNTSSRPGMYPPPGSYRPPPPMGKPPGSIVRPSAPPARSSVPVTRPPVPIPPPPPPPPLPPPPPVIKPQTSAVEQERWDEDSFYGLWDTNDEQGLNSEFKSETAAIPSAPVLPPPPVHSSIPPPGPVPMGMPPMSKPPPVQQTVDYGHGRDISTNKVEQIPYGERITLRPDPLPERSTFETEHAGQRDRYDRERDREPYFDRQSNVIADHRDFKRDRETHRDRDRDRGVIDYDRDRFDRERRPRDDRAQSYRDKKDHSSSRRGGFDRPSYDRKSDRPVYEGPSMFGGERRTYPEERMPLPAPSLSHQPPPAPRVEKKPESKNVDDILKPPGRESRPERIVVIMRGLPGSGKTHVAKLIRDKEVEFGGPAPRVLSLDDYFITEVEKEEKDPDSGKKVKKKVMEYEYEAEMEETYRTSMFKTFKKTLDDGFFPFIILDAINDRVRHFDQFWSAAKTKGFEVYLAEMSADNQTCGKRNIHGRKLKEINKMADHWETAPRHMMRLDIRSLLQDAAIEEVEMEDFDANIEEQKEEKKDAEEEESELGYIPKSKWEMDTSEAKLDKLDGLRTGTKRKRDWEAIASRMEDYLQLPDDYDTRASEPGKKRVRWADLEEKKDADRKRAIGFVVGQTDWEKITDESGHLAEKALNRTKYI</sequence>
<organism>
    <name type="scientific">Homo sapiens</name>
    <name type="common">Human</name>
    <dbReference type="NCBI Taxonomy" id="9606"/>
    <lineage>
        <taxon>Eukaryota</taxon>
        <taxon>Metazoa</taxon>
        <taxon>Chordata</taxon>
        <taxon>Craniata</taxon>
        <taxon>Vertebrata</taxon>
        <taxon>Euteleostomi</taxon>
        <taxon>Mammalia</taxon>
        <taxon>Eutheria</taxon>
        <taxon>Euarchontoglires</taxon>
        <taxon>Primates</taxon>
        <taxon>Haplorrhini</taxon>
        <taxon>Catarrhini</taxon>
        <taxon>Hominidae</taxon>
        <taxon>Homo</taxon>
    </lineage>
</organism>
<name>YLPM1_HUMAN</name>
<reference key="1">
    <citation type="journal article" date="2003" name="Nature">
        <title>The DNA sequence and analysis of human chromosome 14.</title>
        <authorList>
            <person name="Heilig R."/>
            <person name="Eckenberg R."/>
            <person name="Petit J.-L."/>
            <person name="Fonknechten N."/>
            <person name="Da Silva C."/>
            <person name="Cattolico L."/>
            <person name="Levy M."/>
            <person name="Barbe V."/>
            <person name="De Berardinis V."/>
            <person name="Ureta-Vidal A."/>
            <person name="Pelletier E."/>
            <person name="Vico V."/>
            <person name="Anthouard V."/>
            <person name="Rowen L."/>
            <person name="Madan A."/>
            <person name="Qin S."/>
            <person name="Sun H."/>
            <person name="Du H."/>
            <person name="Pepin K."/>
            <person name="Artiguenave F."/>
            <person name="Robert C."/>
            <person name="Cruaud C."/>
            <person name="Bruels T."/>
            <person name="Jaillon O."/>
            <person name="Friedlander L."/>
            <person name="Samson G."/>
            <person name="Brottier P."/>
            <person name="Cure S."/>
            <person name="Segurens B."/>
            <person name="Aniere F."/>
            <person name="Samain S."/>
            <person name="Crespeau H."/>
            <person name="Abbasi N."/>
            <person name="Aiach N."/>
            <person name="Boscus D."/>
            <person name="Dickhoff R."/>
            <person name="Dors M."/>
            <person name="Dubois I."/>
            <person name="Friedman C."/>
            <person name="Gouyvenoux M."/>
            <person name="James R."/>
            <person name="Madan A."/>
            <person name="Mairey-Estrada B."/>
            <person name="Mangenot S."/>
            <person name="Martins N."/>
            <person name="Menard M."/>
            <person name="Oztas S."/>
            <person name="Ratcliffe A."/>
            <person name="Shaffer T."/>
            <person name="Trask B."/>
            <person name="Vacherie B."/>
            <person name="Bellemere C."/>
            <person name="Belser C."/>
            <person name="Besnard-Gonnet M."/>
            <person name="Bartol-Mavel D."/>
            <person name="Boutard M."/>
            <person name="Briez-Silla S."/>
            <person name="Combette S."/>
            <person name="Dufosse-Laurent V."/>
            <person name="Ferron C."/>
            <person name="Lechaplais C."/>
            <person name="Louesse C."/>
            <person name="Muselet D."/>
            <person name="Magdelenat G."/>
            <person name="Pateau E."/>
            <person name="Petit E."/>
            <person name="Sirvain-Trukniewicz P."/>
            <person name="Trybou A."/>
            <person name="Vega-Czarny N."/>
            <person name="Bataille E."/>
            <person name="Bluet E."/>
            <person name="Bordelais I."/>
            <person name="Dubois M."/>
            <person name="Dumont C."/>
            <person name="Guerin T."/>
            <person name="Haffray S."/>
            <person name="Hammadi R."/>
            <person name="Muanga J."/>
            <person name="Pellouin V."/>
            <person name="Robert D."/>
            <person name="Wunderle E."/>
            <person name="Gauguet G."/>
            <person name="Roy A."/>
            <person name="Sainte-Marthe L."/>
            <person name="Verdier J."/>
            <person name="Verdier-Discala C."/>
            <person name="Hillier L.W."/>
            <person name="Fulton L."/>
            <person name="McPherson J."/>
            <person name="Matsuda F."/>
            <person name="Wilson R."/>
            <person name="Scarpelli C."/>
            <person name="Gyapay G."/>
            <person name="Wincker P."/>
            <person name="Saurin W."/>
            <person name="Quetier F."/>
            <person name="Waterston R."/>
            <person name="Hood L."/>
            <person name="Weissenbach J."/>
        </authorList>
    </citation>
    <scope>NUCLEOTIDE SEQUENCE [LARGE SCALE GENOMIC DNA]</scope>
</reference>
<reference key="2">
    <citation type="journal article" date="2004" name="Nat. Genet.">
        <title>Complete sequencing and characterization of 21,243 full-length human cDNAs.</title>
        <authorList>
            <person name="Ota T."/>
            <person name="Suzuki Y."/>
            <person name="Nishikawa T."/>
            <person name="Otsuki T."/>
            <person name="Sugiyama T."/>
            <person name="Irie R."/>
            <person name="Wakamatsu A."/>
            <person name="Hayashi K."/>
            <person name="Sato H."/>
            <person name="Nagai K."/>
            <person name="Kimura K."/>
            <person name="Makita H."/>
            <person name="Sekine M."/>
            <person name="Obayashi M."/>
            <person name="Nishi T."/>
            <person name="Shibahara T."/>
            <person name="Tanaka T."/>
            <person name="Ishii S."/>
            <person name="Yamamoto J."/>
            <person name="Saito K."/>
            <person name="Kawai Y."/>
            <person name="Isono Y."/>
            <person name="Nakamura Y."/>
            <person name="Nagahari K."/>
            <person name="Murakami K."/>
            <person name="Yasuda T."/>
            <person name="Iwayanagi T."/>
            <person name="Wagatsuma M."/>
            <person name="Shiratori A."/>
            <person name="Sudo H."/>
            <person name="Hosoiri T."/>
            <person name="Kaku Y."/>
            <person name="Kodaira H."/>
            <person name="Kondo H."/>
            <person name="Sugawara M."/>
            <person name="Takahashi M."/>
            <person name="Kanda K."/>
            <person name="Yokoi T."/>
            <person name="Furuya T."/>
            <person name="Kikkawa E."/>
            <person name="Omura Y."/>
            <person name="Abe K."/>
            <person name="Kamihara K."/>
            <person name="Katsuta N."/>
            <person name="Sato K."/>
            <person name="Tanikawa M."/>
            <person name="Yamazaki M."/>
            <person name="Ninomiya K."/>
            <person name="Ishibashi T."/>
            <person name="Yamashita H."/>
            <person name="Murakawa K."/>
            <person name="Fujimori K."/>
            <person name="Tanai H."/>
            <person name="Kimata M."/>
            <person name="Watanabe M."/>
            <person name="Hiraoka S."/>
            <person name="Chiba Y."/>
            <person name="Ishida S."/>
            <person name="Ono Y."/>
            <person name="Takiguchi S."/>
            <person name="Watanabe S."/>
            <person name="Yosida M."/>
            <person name="Hotuta T."/>
            <person name="Kusano J."/>
            <person name="Kanehori K."/>
            <person name="Takahashi-Fujii A."/>
            <person name="Hara H."/>
            <person name="Tanase T.-O."/>
            <person name="Nomura Y."/>
            <person name="Togiya S."/>
            <person name="Komai F."/>
            <person name="Hara R."/>
            <person name="Takeuchi K."/>
            <person name="Arita M."/>
            <person name="Imose N."/>
            <person name="Musashino K."/>
            <person name="Yuuki H."/>
            <person name="Oshima A."/>
            <person name="Sasaki N."/>
            <person name="Aotsuka S."/>
            <person name="Yoshikawa Y."/>
            <person name="Matsunawa H."/>
            <person name="Ichihara T."/>
            <person name="Shiohata N."/>
            <person name="Sano S."/>
            <person name="Moriya S."/>
            <person name="Momiyama H."/>
            <person name="Satoh N."/>
            <person name="Takami S."/>
            <person name="Terashima Y."/>
            <person name="Suzuki O."/>
            <person name="Nakagawa S."/>
            <person name="Senoh A."/>
            <person name="Mizoguchi H."/>
            <person name="Goto Y."/>
            <person name="Shimizu F."/>
            <person name="Wakebe H."/>
            <person name="Hishigaki H."/>
            <person name="Watanabe T."/>
            <person name="Sugiyama A."/>
            <person name="Takemoto M."/>
            <person name="Kawakami B."/>
            <person name="Yamazaki M."/>
            <person name="Watanabe K."/>
            <person name="Kumagai A."/>
            <person name="Itakura S."/>
            <person name="Fukuzumi Y."/>
            <person name="Fujimori Y."/>
            <person name="Komiyama M."/>
            <person name="Tashiro H."/>
            <person name="Tanigami A."/>
            <person name="Fujiwara T."/>
            <person name="Ono T."/>
            <person name="Yamada K."/>
            <person name="Fujii Y."/>
            <person name="Ozaki K."/>
            <person name="Hirao M."/>
            <person name="Ohmori Y."/>
            <person name="Kawabata A."/>
            <person name="Hikiji T."/>
            <person name="Kobatake N."/>
            <person name="Inagaki H."/>
            <person name="Ikema Y."/>
            <person name="Okamoto S."/>
            <person name="Okitani R."/>
            <person name="Kawakami T."/>
            <person name="Noguchi S."/>
            <person name="Itoh T."/>
            <person name="Shigeta K."/>
            <person name="Senba T."/>
            <person name="Matsumura K."/>
            <person name="Nakajima Y."/>
            <person name="Mizuno T."/>
            <person name="Morinaga M."/>
            <person name="Sasaki M."/>
            <person name="Togashi T."/>
            <person name="Oyama M."/>
            <person name="Hata H."/>
            <person name="Watanabe M."/>
            <person name="Komatsu T."/>
            <person name="Mizushima-Sugano J."/>
            <person name="Satoh T."/>
            <person name="Shirai Y."/>
            <person name="Takahashi Y."/>
            <person name="Nakagawa K."/>
            <person name="Okumura K."/>
            <person name="Nagase T."/>
            <person name="Nomura N."/>
            <person name="Kikuchi H."/>
            <person name="Masuho Y."/>
            <person name="Yamashita R."/>
            <person name="Nakai K."/>
            <person name="Yada T."/>
            <person name="Nakamura Y."/>
            <person name="Ohara O."/>
            <person name="Isogai T."/>
            <person name="Sugano S."/>
        </authorList>
    </citation>
    <scope>NUCLEOTIDE SEQUENCE [LARGE SCALE MRNA] OF 1-628 (ISOFORM 4)</scope>
    <source>
        <tissue>Fetal brain</tissue>
    </source>
</reference>
<reference key="3">
    <citation type="journal article" date="1995" name="Nature">
        <title>Cloning of a gene bearing missense mutations in early-onset familial Alzheimer's disease.</title>
        <authorList>
            <person name="Sherrington R."/>
            <person name="Rogaev E.I."/>
            <person name="Liang Y."/>
            <person name="Rogaeva E.A."/>
            <person name="Levesque G."/>
            <person name="Ikeda M."/>
            <person name="Chi H."/>
            <person name="Lin C."/>
            <person name="Li G."/>
            <person name="Holman K."/>
            <person name="Tsuda T."/>
            <person name="Mar L."/>
            <person name="Foncin J.-F."/>
            <person name="Bruni A.C."/>
            <person name="Montesi M.P."/>
            <person name="Sorbi S."/>
            <person name="Rainero I."/>
            <person name="Pinessi L."/>
            <person name="Nee L."/>
            <person name="Chumakov I."/>
            <person name="Pollen D."/>
            <person name="Brookes A."/>
            <person name="Sanseau P."/>
            <person name="Polinsky R.J."/>
            <person name="Wasco W."/>
            <person name="da Silva H.A.R."/>
            <person name="Haines J.L."/>
            <person name="Pericak-Vance M.A."/>
            <person name="Tanzi R.E."/>
            <person name="Roses A.D."/>
            <person name="Fraser P.E."/>
            <person name="Rommens J.M."/>
            <person name="St George-Hyslop P.H."/>
        </authorList>
    </citation>
    <scope>NUCLEOTIDE SEQUENCE [MRNA] OF 734-1042 AND 1592-2146 (ISOFORM 3)</scope>
    <source>
        <tissue>Brain</tissue>
    </source>
</reference>
<reference key="4">
    <citation type="journal article" date="2004" name="Genome Res.">
        <title>The status, quality, and expansion of the NIH full-length cDNA project: the Mammalian Gene Collection (MGC).</title>
        <authorList>
            <consortium name="The MGC Project Team"/>
        </authorList>
    </citation>
    <scope>NUCLEOTIDE SEQUENCE [LARGE SCALE MRNA] OF 1761-2146 (ISOFORMS 1/4)</scope>
    <source>
        <tissue>Skin</tissue>
    </source>
</reference>
<reference key="5">
    <citation type="journal article" date="2007" name="Biochim. Biophys. Acta">
        <title>The nuclear PP1 interacting protein ZAP3 (ZAP) is a putative nucleoside kinase that complexes with SAM68, CIA, NF110/45, and HNRNP-G.</title>
        <authorList>
            <person name="Ulke-Lemee A."/>
            <person name="Trinkle-Mulcahy L."/>
            <person name="Chaulk S."/>
            <person name="Bernstein N.K."/>
            <person name="Morrice N."/>
            <person name="Glover M."/>
            <person name="Lamond A.I."/>
            <person name="Moorhead G.B.G."/>
        </authorList>
    </citation>
    <scope>SUBCELLULAR LOCATION</scope>
    <scope>TISSUE SPECIFICITY</scope>
</reference>
<reference key="6">
    <citation type="journal article" date="2008" name="J. Proteome Res.">
        <title>Combining protein-based IMAC, peptide-based IMAC, and MudPIT for efficient phosphoproteomic analysis.</title>
        <authorList>
            <person name="Cantin G.T."/>
            <person name="Yi W."/>
            <person name="Lu B."/>
            <person name="Park S.K."/>
            <person name="Xu T."/>
            <person name="Lee J.-D."/>
            <person name="Yates J.R. III"/>
        </authorList>
    </citation>
    <scope>IDENTIFICATION BY MASS SPECTROMETRY [LARGE SCALE ANALYSIS]</scope>
    <source>
        <tissue>Cervix carcinoma</tissue>
    </source>
</reference>
<reference key="7">
    <citation type="journal article" date="2008" name="Proc. Natl. Acad. Sci. U.S.A.">
        <title>A quantitative atlas of mitotic phosphorylation.</title>
        <authorList>
            <person name="Dephoure N."/>
            <person name="Zhou C."/>
            <person name="Villen J."/>
            <person name="Beausoleil S.A."/>
            <person name="Bakalarski C.E."/>
            <person name="Elledge S.J."/>
            <person name="Gygi S.P."/>
        </authorList>
    </citation>
    <scope>PHOSPHORYLATION [LARGE SCALE ANALYSIS] AT SER-829</scope>
    <scope>IDENTIFICATION BY MASS SPECTROMETRY [LARGE SCALE ANALYSIS]</scope>
    <source>
        <tissue>Cervix carcinoma</tissue>
    </source>
</reference>
<reference key="8">
    <citation type="journal article" date="2009" name="Sci. Signal.">
        <title>Quantitative phosphoproteomic analysis of T cell receptor signaling reveals system-wide modulation of protein-protein interactions.</title>
        <authorList>
            <person name="Mayya V."/>
            <person name="Lundgren D.H."/>
            <person name="Hwang S.-I."/>
            <person name="Rezaul K."/>
            <person name="Wu L."/>
            <person name="Eng J.K."/>
            <person name="Rodionov V."/>
            <person name="Han D.K."/>
        </authorList>
    </citation>
    <scope>PHOSPHORYLATION [LARGE SCALE ANALYSIS] AT SER-829</scope>
    <scope>IDENTIFICATION BY MASS SPECTROMETRY [LARGE SCALE ANALYSIS]</scope>
    <source>
        <tissue>Leukemic T-cell</tissue>
    </source>
</reference>
<reference key="9">
    <citation type="journal article" date="2010" name="Sci. Signal.">
        <title>Quantitative phosphoproteomics reveals widespread full phosphorylation site occupancy during mitosis.</title>
        <authorList>
            <person name="Olsen J.V."/>
            <person name="Vermeulen M."/>
            <person name="Santamaria A."/>
            <person name="Kumar C."/>
            <person name="Miller M.L."/>
            <person name="Jensen L.J."/>
            <person name="Gnad F."/>
            <person name="Cox J."/>
            <person name="Jensen T.S."/>
            <person name="Nigg E.A."/>
            <person name="Brunak S."/>
            <person name="Mann M."/>
        </authorList>
    </citation>
    <scope>PHOSPHORYLATION [LARGE SCALE ANALYSIS] AT SER-829</scope>
    <scope>IDENTIFICATION BY MASS SPECTROMETRY [LARGE SCALE ANALYSIS]</scope>
    <source>
        <tissue>Cervix carcinoma</tissue>
    </source>
</reference>
<reference key="10">
    <citation type="journal article" date="2011" name="BMC Syst. Biol.">
        <title>Initial characterization of the human central proteome.</title>
        <authorList>
            <person name="Burkard T.R."/>
            <person name="Planyavsky M."/>
            <person name="Kaupe I."/>
            <person name="Breitwieser F.P."/>
            <person name="Buerckstuemmer T."/>
            <person name="Bennett K.L."/>
            <person name="Superti-Furga G."/>
            <person name="Colinge J."/>
        </authorList>
    </citation>
    <scope>IDENTIFICATION BY MASS SPECTROMETRY [LARGE SCALE ANALYSIS]</scope>
</reference>
<reference key="11">
    <citation type="journal article" date="2011" name="Sci. Signal.">
        <title>System-wide temporal characterization of the proteome and phosphoproteome of human embryonic stem cell differentiation.</title>
        <authorList>
            <person name="Rigbolt K.T."/>
            <person name="Prokhorova T.A."/>
            <person name="Akimov V."/>
            <person name="Henningsen J."/>
            <person name="Johansen P.T."/>
            <person name="Kratchmarova I."/>
            <person name="Kassem M."/>
            <person name="Mann M."/>
            <person name="Olsen J.V."/>
            <person name="Blagoev B."/>
        </authorList>
    </citation>
    <scope>PHOSPHORYLATION [LARGE SCALE ANALYSIS] AT SER-829 AND SER-1119</scope>
    <scope>IDENTIFICATION BY MASS SPECTROMETRY [LARGE SCALE ANALYSIS]</scope>
</reference>
<reference key="12">
    <citation type="journal article" date="2013" name="J. Proteome Res.">
        <title>Toward a comprehensive characterization of a human cancer cell phosphoproteome.</title>
        <authorList>
            <person name="Zhou H."/>
            <person name="Di Palma S."/>
            <person name="Preisinger C."/>
            <person name="Peng M."/>
            <person name="Polat A.N."/>
            <person name="Heck A.J."/>
            <person name="Mohammed S."/>
        </authorList>
    </citation>
    <scope>PHOSPHORYLATION [LARGE SCALE ANALYSIS] AT SER-756; SER-829; SER-1100; SER-1119 AND SER-1402</scope>
    <scope>IDENTIFICATION BY MASS SPECTROMETRY [LARGE SCALE ANALYSIS]</scope>
    <source>
        <tissue>Cervix carcinoma</tissue>
        <tissue>Erythroleukemia</tissue>
    </source>
</reference>
<reference key="13">
    <citation type="journal article" date="2014" name="J. Proteomics">
        <title>An enzyme assisted RP-RPLC approach for in-depth analysis of human liver phosphoproteome.</title>
        <authorList>
            <person name="Bian Y."/>
            <person name="Song C."/>
            <person name="Cheng K."/>
            <person name="Dong M."/>
            <person name="Wang F."/>
            <person name="Huang J."/>
            <person name="Sun D."/>
            <person name="Wang L."/>
            <person name="Ye M."/>
            <person name="Zou H."/>
        </authorList>
    </citation>
    <scope>IDENTIFICATION BY MASS SPECTROMETRY [LARGE SCALE ANALYSIS]</scope>
    <source>
        <tissue>Liver</tissue>
    </source>
</reference>
<reference key="14">
    <citation type="journal article" date="2014" name="Mol. Cell. Proteomics">
        <title>Immunoaffinity enrichment and mass spectrometry analysis of protein methylation.</title>
        <authorList>
            <person name="Guo A."/>
            <person name="Gu H."/>
            <person name="Zhou J."/>
            <person name="Mulhern D."/>
            <person name="Wang Y."/>
            <person name="Lee K.A."/>
            <person name="Yang V."/>
            <person name="Aguiar M."/>
            <person name="Kornhauser J."/>
            <person name="Jia X."/>
            <person name="Ren J."/>
            <person name="Beausoleil S.A."/>
            <person name="Silva J.C."/>
            <person name="Vemulapalli V."/>
            <person name="Bedford M.T."/>
            <person name="Comb M.J."/>
        </authorList>
    </citation>
    <scope>METHYLATION [LARGE SCALE ANALYSIS] AT LYS-735; ARG-814 AND ARG-831</scope>
    <scope>IDENTIFICATION BY MASS SPECTROMETRY [LARGE SCALE ANALYSIS]</scope>
    <source>
        <tissue>Colon carcinoma</tissue>
    </source>
</reference>
<reference key="15">
    <citation type="journal article" date="2014" name="Nat. Struct. Mol. Biol.">
        <title>Uncovering global SUMOylation signaling networks in a site-specific manner.</title>
        <authorList>
            <person name="Hendriks I.A."/>
            <person name="D'Souza R.C."/>
            <person name="Yang B."/>
            <person name="Verlaan-de Vries M."/>
            <person name="Mann M."/>
            <person name="Vertegaal A.C."/>
        </authorList>
    </citation>
    <scope>SUMOYLATION [LARGE SCALE ANALYSIS] AT LYS-1053</scope>
    <scope>IDENTIFICATION BY MASS SPECTROMETRY [LARGE SCALE ANALYSIS]</scope>
</reference>
<reference key="16">
    <citation type="journal article" date="2014" name="Proc. Natl. Acad. Sci. U.S.A.">
        <title>Mapping of SUMO sites and analysis of SUMOylation changes induced by external stimuli.</title>
        <authorList>
            <person name="Impens F."/>
            <person name="Radoshevich L."/>
            <person name="Cossart P."/>
            <person name="Ribet D."/>
        </authorList>
    </citation>
    <scope>SUMOYLATION [LARGE SCALE ANALYSIS] AT LYS-983 AND LYS-1053</scope>
    <scope>IDENTIFICATION BY MASS SPECTROMETRY [LARGE SCALE ANALYSIS]</scope>
</reference>
<reference key="17">
    <citation type="journal article" date="2015" name="Cell Rep.">
        <title>SUMO-2 orchestrates chromatin modifiers in response to DNA damage.</title>
        <authorList>
            <person name="Hendriks I.A."/>
            <person name="Treffers L.W."/>
            <person name="Verlaan-de Vries M."/>
            <person name="Olsen J.V."/>
            <person name="Vertegaal A.C."/>
        </authorList>
    </citation>
    <scope>SUMOYLATION [LARGE SCALE ANALYSIS] AT LYS-1053</scope>
    <scope>IDENTIFICATION BY MASS SPECTROMETRY [LARGE SCALE ANALYSIS]</scope>
</reference>
<reference key="18">
    <citation type="journal article" date="2015" name="Mol. Cell. Proteomics">
        <title>System-wide analysis of SUMOylation dynamics in response to replication stress reveals novel small ubiquitin-like modified target proteins and acceptor lysines relevant for genome stability.</title>
        <authorList>
            <person name="Xiao Z."/>
            <person name="Chang J.G."/>
            <person name="Hendriks I.A."/>
            <person name="Sigurdsson J.O."/>
            <person name="Olsen J.V."/>
            <person name="Vertegaal A.C."/>
        </authorList>
    </citation>
    <scope>SUMOYLATION [LARGE SCALE ANALYSIS] AT LYS-1053</scope>
    <scope>IDENTIFICATION BY MASS SPECTROMETRY [LARGE SCALE ANALYSIS]</scope>
</reference>
<reference key="19">
    <citation type="journal article" date="2017" name="Nat. Struct. Mol. Biol.">
        <title>Site-specific mapping of the human SUMO proteome reveals co-modification with phosphorylation.</title>
        <authorList>
            <person name="Hendriks I.A."/>
            <person name="Lyon D."/>
            <person name="Young C."/>
            <person name="Jensen L.J."/>
            <person name="Vertegaal A.C."/>
            <person name="Nielsen M.L."/>
        </authorList>
    </citation>
    <scope>SUMOYLATION [LARGE SCALE ANALYSIS] AT LYS-891; LYS-983; LYS-1053; LYS-1652 AND LYS-1710</scope>
    <scope>IDENTIFICATION BY MASS SPECTROMETRY [LARGE SCALE ANALYSIS]</scope>
</reference>
<gene>
    <name type="primary">YLPM1</name>
    <name type="synonym">C14orf170</name>
    <name type="synonym">ZAP3</name>
</gene>
<dbReference type="EMBL" id="AC007956">
    <property type="protein sequence ID" value="AAF61275.1"/>
    <property type="status" value="ALT_SEQ"/>
    <property type="molecule type" value="Genomic_DNA"/>
</dbReference>
<dbReference type="EMBL" id="AK095760">
    <property type="status" value="NOT_ANNOTATED_CDS"/>
    <property type="molecule type" value="mRNA"/>
</dbReference>
<dbReference type="EMBL" id="L40403">
    <property type="protein sequence ID" value="AAC42008.1"/>
    <property type="status" value="ALT_FRAME"/>
    <property type="molecule type" value="mRNA"/>
</dbReference>
<dbReference type="EMBL" id="L40400">
    <property type="protein sequence ID" value="AAC42006.1"/>
    <property type="molecule type" value="mRNA"/>
</dbReference>
<dbReference type="EMBL" id="BC007792">
    <property type="protein sequence ID" value="AAH07792.1"/>
    <property type="molecule type" value="mRNA"/>
</dbReference>
<dbReference type="CCDS" id="CCDS45135.1">
    <molecule id="P49750-4"/>
</dbReference>
<dbReference type="RefSeq" id="NP_062535.2">
    <molecule id="P49750-4"/>
    <property type="nucleotide sequence ID" value="NM_019589.2"/>
</dbReference>
<dbReference type="SMR" id="P49750"/>
<dbReference type="BioGRID" id="121117">
    <property type="interactions" value="175"/>
</dbReference>
<dbReference type="DIP" id="DIP-53676N"/>
<dbReference type="FunCoup" id="P49750">
    <property type="interactions" value="4447"/>
</dbReference>
<dbReference type="IntAct" id="P49750">
    <property type="interactions" value="106"/>
</dbReference>
<dbReference type="MINT" id="P49750"/>
<dbReference type="STRING" id="9606.ENSP00000324463"/>
<dbReference type="GlyCosmos" id="P49750">
    <property type="glycosylation" value="7 sites, 2 glycans"/>
</dbReference>
<dbReference type="GlyGen" id="P49750">
    <property type="glycosylation" value="12 sites, 2 O-linked glycans (10 sites)"/>
</dbReference>
<dbReference type="iPTMnet" id="P49750"/>
<dbReference type="PhosphoSitePlus" id="P49750"/>
<dbReference type="SwissPalm" id="P49750"/>
<dbReference type="BioMuta" id="YLPM1"/>
<dbReference type="DMDM" id="57015374"/>
<dbReference type="jPOST" id="P49750"/>
<dbReference type="MassIVE" id="P49750"/>
<dbReference type="PaxDb" id="9606-ENSP00000324463"/>
<dbReference type="PeptideAtlas" id="P49750"/>
<dbReference type="ProteomicsDB" id="56063">
    <molecule id="P49750-1"/>
</dbReference>
<dbReference type="ProteomicsDB" id="56064">
    <molecule id="P49750-3"/>
</dbReference>
<dbReference type="ProteomicsDB" id="56065">
    <molecule id="P49750-4"/>
</dbReference>
<dbReference type="Pumba" id="P49750"/>
<dbReference type="Antibodypedia" id="62380">
    <property type="antibodies" value="17 antibodies from 7 providers"/>
</dbReference>
<dbReference type="DNASU" id="56252"/>
<dbReference type="Ensembl" id="ENST00000325680.12">
    <molecule id="P49750-4"/>
    <property type="protein sequence ID" value="ENSP00000324463.7"/>
    <property type="gene ID" value="ENSG00000119596.18"/>
</dbReference>
<dbReference type="GeneID" id="56252"/>
<dbReference type="KEGG" id="hsa:56252"/>
<dbReference type="MANE-Select" id="ENST00000325680.12">
    <property type="protein sequence ID" value="ENSP00000324463.7"/>
    <property type="RefSeq nucleotide sequence ID" value="NM_019589.3"/>
    <property type="RefSeq protein sequence ID" value="NP_062535.2"/>
</dbReference>
<dbReference type="UCSC" id="uc001xqj.5">
    <molecule id="P49750-4"/>
    <property type="organism name" value="human"/>
</dbReference>
<dbReference type="AGR" id="HGNC:17798"/>
<dbReference type="CTD" id="56252"/>
<dbReference type="DisGeNET" id="56252"/>
<dbReference type="GeneCards" id="YLPM1"/>
<dbReference type="HGNC" id="HGNC:17798">
    <property type="gene designation" value="YLPM1"/>
</dbReference>
<dbReference type="HPA" id="ENSG00000119596">
    <property type="expression patterns" value="Low tissue specificity"/>
</dbReference>
<dbReference type="MIM" id="619766">
    <property type="type" value="gene"/>
</dbReference>
<dbReference type="neXtProt" id="NX_P49750"/>
<dbReference type="OpenTargets" id="ENSG00000119596"/>
<dbReference type="PharmGKB" id="PA134962086"/>
<dbReference type="VEuPathDB" id="HostDB:ENSG00000119596"/>
<dbReference type="eggNOG" id="KOG2400">
    <property type="taxonomic scope" value="Eukaryota"/>
</dbReference>
<dbReference type="GeneTree" id="ENSGT00440000039837"/>
<dbReference type="InParanoid" id="P49750"/>
<dbReference type="OMA" id="HEDDRMQ"/>
<dbReference type="OrthoDB" id="513595at2759"/>
<dbReference type="PAN-GO" id="P49750">
    <property type="GO annotations" value="2 GO annotations based on evolutionary models"/>
</dbReference>
<dbReference type="PhylomeDB" id="P49750"/>
<dbReference type="TreeFam" id="TF329361"/>
<dbReference type="PathwayCommons" id="P49750"/>
<dbReference type="SignaLink" id="P49750"/>
<dbReference type="BioGRID-ORCS" id="56252">
    <property type="hits" value="60 hits in 1183 CRISPR screens"/>
</dbReference>
<dbReference type="CD-CODE" id="DEE660B4">
    <property type="entry name" value="Stress granule"/>
</dbReference>
<dbReference type="ChiTaRS" id="YLPM1">
    <property type="organism name" value="human"/>
</dbReference>
<dbReference type="GeneWiki" id="YLPM1"/>
<dbReference type="GenomeRNAi" id="56252"/>
<dbReference type="Pharos" id="P49750">
    <property type="development level" value="Tdark"/>
</dbReference>
<dbReference type="PRO" id="PR:P49750"/>
<dbReference type="Proteomes" id="UP000005640">
    <property type="component" value="Chromosome 14"/>
</dbReference>
<dbReference type="RNAct" id="P49750">
    <property type="molecule type" value="protein"/>
</dbReference>
<dbReference type="Bgee" id="ENSG00000119596">
    <property type="expression patterns" value="Expressed in ganglionic eminence and 202 other cell types or tissues"/>
</dbReference>
<dbReference type="ExpressionAtlas" id="P49750">
    <property type="expression patterns" value="baseline and differential"/>
</dbReference>
<dbReference type="GO" id="GO:0016607">
    <property type="term" value="C:nuclear speck"/>
    <property type="evidence" value="ECO:0000314"/>
    <property type="project" value="HPA"/>
</dbReference>
<dbReference type="GO" id="GO:0005634">
    <property type="term" value="C:nucleus"/>
    <property type="evidence" value="ECO:0000314"/>
    <property type="project" value="UniProtKB"/>
</dbReference>
<dbReference type="GO" id="GO:0003723">
    <property type="term" value="F:RNA binding"/>
    <property type="evidence" value="ECO:0007005"/>
    <property type="project" value="UniProtKB"/>
</dbReference>
<dbReference type="GO" id="GO:0032204">
    <property type="term" value="P:regulation of telomere maintenance"/>
    <property type="evidence" value="ECO:0000318"/>
    <property type="project" value="GO_Central"/>
</dbReference>
<dbReference type="FunFam" id="3.40.50.300:FF:000399">
    <property type="entry name" value="YLP motif containing 1"/>
    <property type="match status" value="1"/>
</dbReference>
<dbReference type="Gene3D" id="3.40.50.300">
    <property type="entry name" value="P-loop containing nucleotide triphosphate hydrolases"/>
    <property type="match status" value="1"/>
</dbReference>
<dbReference type="InterPro" id="IPR027417">
    <property type="entry name" value="P-loop_NTPase"/>
</dbReference>
<dbReference type="InterPro" id="IPR026314">
    <property type="entry name" value="YLP_motif_con_p1"/>
</dbReference>
<dbReference type="PANTHER" id="PTHR13413">
    <property type="entry name" value="YLP MOTIF CONTAINING PROTEIN NUCLEAR PROTEIN ZAP"/>
    <property type="match status" value="1"/>
</dbReference>
<dbReference type="PANTHER" id="PTHR13413:SF0">
    <property type="entry name" value="YLP MOTIF-CONTAINING PROTEIN 1"/>
    <property type="match status" value="1"/>
</dbReference>
<dbReference type="Pfam" id="PF13671">
    <property type="entry name" value="AAA_33"/>
    <property type="match status" value="1"/>
</dbReference>
<dbReference type="SUPFAM" id="SSF52540">
    <property type="entry name" value="P-loop containing nucleoside triphosphate hydrolases"/>
    <property type="match status" value="1"/>
</dbReference>
<keyword id="KW-0025">Alternative splicing</keyword>
<keyword id="KW-1017">Isopeptide bond</keyword>
<keyword id="KW-0488">Methylation</keyword>
<keyword id="KW-0539">Nucleus</keyword>
<keyword id="KW-0597">Phosphoprotein</keyword>
<keyword id="KW-1267">Proteomics identification</keyword>
<keyword id="KW-1185">Reference proteome</keyword>
<keyword id="KW-0678">Repressor</keyword>
<keyword id="KW-0804">Transcription</keyword>
<keyword id="KW-0805">Transcription regulation</keyword>
<keyword id="KW-0832">Ubl conjugation</keyword>
<protein>
    <recommendedName>
        <fullName>YLP motif-containing protein 1</fullName>
    </recommendedName>
    <alternativeName>
        <fullName>Nuclear protein ZAP3</fullName>
    </alternativeName>
    <alternativeName>
        <fullName>ZAP113</fullName>
    </alternativeName>
</protein>
<evidence type="ECO:0000250" key="1"/>
<evidence type="ECO:0000256" key="2">
    <source>
        <dbReference type="SAM" id="MobiDB-lite"/>
    </source>
</evidence>
<evidence type="ECO:0000269" key="3">
    <source>
    </source>
</evidence>
<evidence type="ECO:0000305" key="4"/>
<evidence type="ECO:0007744" key="5">
    <source>
    </source>
</evidence>
<evidence type="ECO:0007744" key="6">
    <source>
    </source>
</evidence>
<evidence type="ECO:0007744" key="7">
    <source>
    </source>
</evidence>
<evidence type="ECO:0007744" key="8">
    <source>
    </source>
</evidence>
<evidence type="ECO:0007744" key="9">
    <source>
    </source>
</evidence>
<evidence type="ECO:0007744" key="10">
    <source>
    </source>
</evidence>
<evidence type="ECO:0007744" key="11">
    <source>
    </source>
</evidence>
<evidence type="ECO:0007744" key="12">
    <source>
    </source>
</evidence>
<evidence type="ECO:0007744" key="13">
    <source>
    </source>
</evidence>
<evidence type="ECO:0007744" key="14">
    <source>
    </source>
</evidence>
<evidence type="ECO:0007744" key="15">
    <source>
    </source>
</evidence>
<accession>P49750</accession>
<accession>P49752</accession>
<accession>Q96I64</accession>
<accession>Q9P1V7</accession>
<proteinExistence type="evidence at protein level"/>